<feature type="chain" id="PRO_1000203961" description="Glycerol kinase">
    <location>
        <begin position="1"/>
        <end position="501"/>
    </location>
</feature>
<feature type="binding site" evidence="1">
    <location>
        <position position="16"/>
    </location>
    <ligand>
        <name>ADP</name>
        <dbReference type="ChEBI" id="CHEBI:456216"/>
    </ligand>
</feature>
<feature type="binding site" evidence="1">
    <location>
        <position position="16"/>
    </location>
    <ligand>
        <name>ATP</name>
        <dbReference type="ChEBI" id="CHEBI:30616"/>
    </ligand>
</feature>
<feature type="binding site" evidence="1">
    <location>
        <position position="16"/>
    </location>
    <ligand>
        <name>sn-glycerol 3-phosphate</name>
        <dbReference type="ChEBI" id="CHEBI:57597"/>
    </ligand>
</feature>
<feature type="binding site" evidence="1">
    <location>
        <position position="17"/>
    </location>
    <ligand>
        <name>ATP</name>
        <dbReference type="ChEBI" id="CHEBI:30616"/>
    </ligand>
</feature>
<feature type="binding site" evidence="1">
    <location>
        <position position="18"/>
    </location>
    <ligand>
        <name>ATP</name>
        <dbReference type="ChEBI" id="CHEBI:30616"/>
    </ligand>
</feature>
<feature type="binding site" evidence="1">
    <location>
        <position position="20"/>
    </location>
    <ligand>
        <name>ADP</name>
        <dbReference type="ChEBI" id="CHEBI:456216"/>
    </ligand>
</feature>
<feature type="binding site" evidence="1">
    <location>
        <position position="84"/>
    </location>
    <ligand>
        <name>glycerol</name>
        <dbReference type="ChEBI" id="CHEBI:17754"/>
    </ligand>
</feature>
<feature type="binding site" evidence="1">
    <location>
        <position position="84"/>
    </location>
    <ligand>
        <name>sn-glycerol 3-phosphate</name>
        <dbReference type="ChEBI" id="CHEBI:57597"/>
    </ligand>
</feature>
<feature type="binding site" evidence="1">
    <location>
        <position position="85"/>
    </location>
    <ligand>
        <name>glycerol</name>
        <dbReference type="ChEBI" id="CHEBI:17754"/>
    </ligand>
</feature>
<feature type="binding site" evidence="1">
    <location>
        <position position="85"/>
    </location>
    <ligand>
        <name>sn-glycerol 3-phosphate</name>
        <dbReference type="ChEBI" id="CHEBI:57597"/>
    </ligand>
</feature>
<feature type="binding site" evidence="1">
    <location>
        <position position="135"/>
    </location>
    <ligand>
        <name>glycerol</name>
        <dbReference type="ChEBI" id="CHEBI:17754"/>
    </ligand>
</feature>
<feature type="binding site" evidence="1">
    <location>
        <position position="135"/>
    </location>
    <ligand>
        <name>sn-glycerol 3-phosphate</name>
        <dbReference type="ChEBI" id="CHEBI:57597"/>
    </ligand>
</feature>
<feature type="binding site" evidence="1">
    <location>
        <position position="242"/>
    </location>
    <ligand>
        <name>glycerol</name>
        <dbReference type="ChEBI" id="CHEBI:17754"/>
    </ligand>
</feature>
<feature type="binding site" evidence="1">
    <location>
        <position position="242"/>
    </location>
    <ligand>
        <name>sn-glycerol 3-phosphate</name>
        <dbReference type="ChEBI" id="CHEBI:57597"/>
    </ligand>
</feature>
<feature type="binding site" evidence="1">
    <location>
        <position position="243"/>
    </location>
    <ligand>
        <name>glycerol</name>
        <dbReference type="ChEBI" id="CHEBI:17754"/>
    </ligand>
</feature>
<feature type="binding site" evidence="1">
    <location>
        <position position="264"/>
    </location>
    <ligand>
        <name>ADP</name>
        <dbReference type="ChEBI" id="CHEBI:456216"/>
    </ligand>
</feature>
<feature type="binding site" evidence="1">
    <location>
        <position position="264"/>
    </location>
    <ligand>
        <name>ATP</name>
        <dbReference type="ChEBI" id="CHEBI:30616"/>
    </ligand>
</feature>
<feature type="binding site" evidence="1">
    <location>
        <position position="307"/>
    </location>
    <ligand>
        <name>ADP</name>
        <dbReference type="ChEBI" id="CHEBI:456216"/>
    </ligand>
</feature>
<feature type="binding site" evidence="1">
    <location>
        <position position="307"/>
    </location>
    <ligand>
        <name>ATP</name>
        <dbReference type="ChEBI" id="CHEBI:30616"/>
    </ligand>
</feature>
<feature type="binding site" evidence="1">
    <location>
        <position position="311"/>
    </location>
    <ligand>
        <name>ATP</name>
        <dbReference type="ChEBI" id="CHEBI:30616"/>
    </ligand>
</feature>
<feature type="binding site" evidence="1">
    <location>
        <position position="408"/>
    </location>
    <ligand>
        <name>ADP</name>
        <dbReference type="ChEBI" id="CHEBI:456216"/>
    </ligand>
</feature>
<feature type="binding site" evidence="1">
    <location>
        <position position="408"/>
    </location>
    <ligand>
        <name>ATP</name>
        <dbReference type="ChEBI" id="CHEBI:30616"/>
    </ligand>
</feature>
<keyword id="KW-0067">ATP-binding</keyword>
<keyword id="KW-0319">Glycerol metabolism</keyword>
<keyword id="KW-0418">Kinase</keyword>
<keyword id="KW-0547">Nucleotide-binding</keyword>
<keyword id="KW-0808">Transferase</keyword>
<name>GLPK_SACI6</name>
<comment type="function">
    <text evidence="1">Key enzyme in the regulation of glycerol uptake and metabolism. Catalyzes the phosphorylation of glycerol to yield sn-glycerol 3-phosphate.</text>
</comment>
<comment type="catalytic activity">
    <reaction evidence="1">
        <text>glycerol + ATP = sn-glycerol 3-phosphate + ADP + H(+)</text>
        <dbReference type="Rhea" id="RHEA:21644"/>
        <dbReference type="ChEBI" id="CHEBI:15378"/>
        <dbReference type="ChEBI" id="CHEBI:17754"/>
        <dbReference type="ChEBI" id="CHEBI:30616"/>
        <dbReference type="ChEBI" id="CHEBI:57597"/>
        <dbReference type="ChEBI" id="CHEBI:456216"/>
        <dbReference type="EC" id="2.7.1.30"/>
    </reaction>
</comment>
<comment type="pathway">
    <text evidence="1">Polyol metabolism; glycerol degradation via glycerol kinase pathway; sn-glycerol 3-phosphate from glycerol: step 1/1.</text>
</comment>
<comment type="similarity">
    <text evidence="1">Belongs to the FGGY kinase family.</text>
</comment>
<protein>
    <recommendedName>
        <fullName evidence="1">Glycerol kinase</fullName>
        <ecNumber evidence="1">2.7.1.30</ecNumber>
    </recommendedName>
    <alternativeName>
        <fullName evidence="1">ATP:glycerol 3-phosphotransferase</fullName>
    </alternativeName>
    <alternativeName>
        <fullName evidence="1">Glycerokinase</fullName>
        <shortName evidence="1">GK</shortName>
    </alternativeName>
</protein>
<gene>
    <name evidence="1" type="primary">glpK</name>
    <name type="ordered locus">M164_0539</name>
</gene>
<organism>
    <name type="scientific">Saccharolobus islandicus (strain M.16.4 / Kamchatka #3)</name>
    <name type="common">Sulfolobus islandicus</name>
    <dbReference type="NCBI Taxonomy" id="426118"/>
    <lineage>
        <taxon>Archaea</taxon>
        <taxon>Thermoproteota</taxon>
        <taxon>Thermoprotei</taxon>
        <taxon>Sulfolobales</taxon>
        <taxon>Sulfolobaceae</taxon>
        <taxon>Saccharolobus</taxon>
    </lineage>
</organism>
<sequence length="501" mass="55739">MNTMSHKFVLALDEGTTSARAILFDSDLNIVNIGQYEFPQHYPQPGYVEHDPEEIWEAQMLAVKKAISKIDAKQIVAIGITNQRETTVLWDAKSGKPVYNAIVWQDRRTSPITDWLKANYFKMIKDKTGLVPDPYFSASKIKWILDNVSNVREKAERGEIKFGTIDTYLIWRLTNGKAHVTDYSNASRTMLFNINKLEWDREILELLKIPESILPEVKPSSEIYGYSEALGNLIPISGDAGDQQAALFGQVAFNVGEIKATYGTGSFILMNIGNNPIRSENLLTTIAWGLEKNKAKYALEGSIFITGAAVQWFRDGLRAIDVSDEIEPLASSVEDNGGVYFVPAFVGLGAPYWDPYARGLIIGITRGTTKAHIARAILESMAYQTRDVIEVMQKEAGISINSLKVDGGAAKDNLLMQFQADILGIKVIRPKVMETTSMGVAMLAGLGVGLWNSLEELRNIWKVDKEFIPSMSEEKRRALYSGWKEAVKRAMGWAKVVGGQV</sequence>
<accession>C4KEH1</accession>
<reference key="1">
    <citation type="journal article" date="2009" name="Proc. Natl. Acad. Sci. U.S.A.">
        <title>Biogeography of the Sulfolobus islandicus pan-genome.</title>
        <authorList>
            <person name="Reno M.L."/>
            <person name="Held N.L."/>
            <person name="Fields C.J."/>
            <person name="Burke P.V."/>
            <person name="Whitaker R.J."/>
        </authorList>
    </citation>
    <scope>NUCLEOTIDE SEQUENCE [LARGE SCALE GENOMIC DNA]</scope>
    <source>
        <strain>M.16.4 / Kamchatka #3</strain>
    </source>
</reference>
<evidence type="ECO:0000255" key="1">
    <source>
        <dbReference type="HAMAP-Rule" id="MF_00186"/>
    </source>
</evidence>
<dbReference type="EC" id="2.7.1.30" evidence="1"/>
<dbReference type="EMBL" id="CP001402">
    <property type="protein sequence ID" value="ACR41168.1"/>
    <property type="molecule type" value="Genomic_DNA"/>
</dbReference>
<dbReference type="RefSeq" id="WP_012710631.1">
    <property type="nucleotide sequence ID" value="NC_012726.1"/>
</dbReference>
<dbReference type="SMR" id="C4KEH1"/>
<dbReference type="GeneID" id="84061005"/>
<dbReference type="KEGG" id="sid:M164_0539"/>
<dbReference type="HOGENOM" id="CLU_009281_2_3_2"/>
<dbReference type="UniPathway" id="UPA00618">
    <property type="reaction ID" value="UER00672"/>
</dbReference>
<dbReference type="Proteomes" id="UP000001479">
    <property type="component" value="Chromosome"/>
</dbReference>
<dbReference type="GO" id="GO:0005829">
    <property type="term" value="C:cytosol"/>
    <property type="evidence" value="ECO:0007669"/>
    <property type="project" value="TreeGrafter"/>
</dbReference>
<dbReference type="GO" id="GO:0005524">
    <property type="term" value="F:ATP binding"/>
    <property type="evidence" value="ECO:0007669"/>
    <property type="project" value="UniProtKB-UniRule"/>
</dbReference>
<dbReference type="GO" id="GO:0004370">
    <property type="term" value="F:glycerol kinase activity"/>
    <property type="evidence" value="ECO:0000250"/>
    <property type="project" value="UniProtKB"/>
</dbReference>
<dbReference type="GO" id="GO:0019563">
    <property type="term" value="P:glycerol catabolic process"/>
    <property type="evidence" value="ECO:0007669"/>
    <property type="project" value="UniProtKB-UniRule"/>
</dbReference>
<dbReference type="GO" id="GO:0006071">
    <property type="term" value="P:glycerol metabolic process"/>
    <property type="evidence" value="ECO:0000250"/>
    <property type="project" value="UniProtKB"/>
</dbReference>
<dbReference type="GO" id="GO:0006072">
    <property type="term" value="P:glycerol-3-phosphate metabolic process"/>
    <property type="evidence" value="ECO:0007669"/>
    <property type="project" value="InterPro"/>
</dbReference>
<dbReference type="CDD" id="cd07786">
    <property type="entry name" value="FGGY_EcGK_like"/>
    <property type="match status" value="1"/>
</dbReference>
<dbReference type="FunFam" id="3.30.420.40:FF:000007">
    <property type="entry name" value="Glycerol kinase"/>
    <property type="match status" value="1"/>
</dbReference>
<dbReference type="FunFam" id="3.30.420.40:FF:000008">
    <property type="entry name" value="Glycerol kinase"/>
    <property type="match status" value="1"/>
</dbReference>
<dbReference type="Gene3D" id="3.30.420.40">
    <property type="match status" value="2"/>
</dbReference>
<dbReference type="HAMAP" id="MF_00186">
    <property type="entry name" value="Glycerol_kin"/>
    <property type="match status" value="1"/>
</dbReference>
<dbReference type="InterPro" id="IPR043129">
    <property type="entry name" value="ATPase_NBD"/>
</dbReference>
<dbReference type="InterPro" id="IPR000577">
    <property type="entry name" value="Carb_kinase_FGGY"/>
</dbReference>
<dbReference type="InterPro" id="IPR018483">
    <property type="entry name" value="Carb_kinase_FGGY_CS"/>
</dbReference>
<dbReference type="InterPro" id="IPR018485">
    <property type="entry name" value="FGGY_C"/>
</dbReference>
<dbReference type="InterPro" id="IPR018484">
    <property type="entry name" value="FGGY_N"/>
</dbReference>
<dbReference type="InterPro" id="IPR005999">
    <property type="entry name" value="Glycerol_kin"/>
</dbReference>
<dbReference type="NCBIfam" id="TIGR01311">
    <property type="entry name" value="glycerol_kin"/>
    <property type="match status" value="1"/>
</dbReference>
<dbReference type="NCBIfam" id="NF000756">
    <property type="entry name" value="PRK00047.1"/>
    <property type="match status" value="1"/>
</dbReference>
<dbReference type="PANTHER" id="PTHR10196:SF69">
    <property type="entry name" value="GLYCEROL KINASE"/>
    <property type="match status" value="1"/>
</dbReference>
<dbReference type="PANTHER" id="PTHR10196">
    <property type="entry name" value="SUGAR KINASE"/>
    <property type="match status" value="1"/>
</dbReference>
<dbReference type="Pfam" id="PF02782">
    <property type="entry name" value="FGGY_C"/>
    <property type="match status" value="1"/>
</dbReference>
<dbReference type="Pfam" id="PF00370">
    <property type="entry name" value="FGGY_N"/>
    <property type="match status" value="1"/>
</dbReference>
<dbReference type="PIRSF" id="PIRSF000538">
    <property type="entry name" value="GlpK"/>
    <property type="match status" value="1"/>
</dbReference>
<dbReference type="SUPFAM" id="SSF53067">
    <property type="entry name" value="Actin-like ATPase domain"/>
    <property type="match status" value="2"/>
</dbReference>
<dbReference type="PROSITE" id="PS00933">
    <property type="entry name" value="FGGY_KINASES_1"/>
    <property type="match status" value="1"/>
</dbReference>
<dbReference type="PROSITE" id="PS00445">
    <property type="entry name" value="FGGY_KINASES_2"/>
    <property type="match status" value="1"/>
</dbReference>
<proteinExistence type="inferred from homology"/>